<evidence type="ECO:0000250" key="1">
    <source>
        <dbReference type="UniProtKB" id="O04925"/>
    </source>
</evidence>
<evidence type="ECO:0000255" key="2"/>
<evidence type="ECO:0000256" key="3">
    <source>
        <dbReference type="SAM" id="MobiDB-lite"/>
    </source>
</evidence>
<evidence type="ECO:0000269" key="4">
    <source>
    </source>
</evidence>
<evidence type="ECO:0000269" key="5">
    <source>
    </source>
</evidence>
<evidence type="ECO:0000303" key="6">
    <source>
    </source>
</evidence>
<evidence type="ECO:0000305" key="7"/>
<evidence type="ECO:0000312" key="8">
    <source>
        <dbReference type="EMBL" id="AAO67349.2"/>
    </source>
</evidence>
<protein>
    <recommendedName>
        <fullName evidence="6">Oleosin Cor a 12</fullName>
    </recommendedName>
    <allergenName evidence="6">Cor a 12</allergenName>
</protein>
<reference evidence="8" key="1">
    <citation type="journal article" date="2006" name="Mol. Nutr. Food Res.">
        <title>Cloning of oleosin, a putative new hazelnut allergen, using a hazelnut cDNA library.</title>
        <authorList>
            <person name="Akkerdaas J.H."/>
            <person name="Schocker F."/>
            <person name="Vieths S."/>
            <person name="Versteeg S."/>
            <person name="Zuidmeer L."/>
            <person name="Hefle S.L."/>
            <person name="Aalberse R.C."/>
            <person name="Richter K."/>
            <person name="Ferreira F."/>
            <person name="van Ree R."/>
        </authorList>
    </citation>
    <scope>NUCLEOTIDE SEQUENCE [MRNA]</scope>
    <scope>TISSUE SPECIFICITY</scope>
</reference>
<reference evidence="7" key="2">
    <citation type="journal article" date="2021" name="Pediatr. Allergy Immunol.">
        <title>Oleosin Cor a 15 is a novel allergen for Italian hazelnut allergic children.</title>
        <authorList>
            <person name="Nebbia S."/>
            <person name="Lamberti C."/>
            <person name="Cirrincione S."/>
            <person name="Acquadro A."/>
            <person name="Abba S."/>
            <person name="Ciuffo M."/>
            <person name="Torello Marinoni D."/>
            <person name="Manfredi M."/>
            <person name="Marengo E."/>
            <person name="Calzedda R."/>
            <person name="Monti G."/>
            <person name="Cavallarin L."/>
            <person name="Giuffrida M.G."/>
        </authorList>
    </citation>
    <scope>MASS SPECTROMETRY</scope>
    <scope>ALLERGEN</scope>
</reference>
<keyword id="KW-0020">Allergen</keyword>
<keyword id="KW-0551">Lipid droplet</keyword>
<keyword id="KW-0472">Membrane</keyword>
<keyword id="KW-0812">Transmembrane</keyword>
<keyword id="KW-1133">Transmembrane helix</keyword>
<sequence>MADRPQQLQVHPQRGHGHYEGGIKNQRGGGPSAVKVMAVLAALPVGGTLLALAGLTLAGSVIGLLVTSPLFIIFSPVLVPAAIVVGLAVASFLSSGALGLTGLSSLSWVLNYLRCASQSLPREMDQAKRRMQDMAAFVGQKTREVGQEIQSRAQEGRRT</sequence>
<dbReference type="EMBL" id="AY224679">
    <property type="protein sequence ID" value="AAO67349.2"/>
    <property type="molecule type" value="mRNA"/>
</dbReference>
<dbReference type="RefSeq" id="XP_059449621.1">
    <property type="nucleotide sequence ID" value="XM_059593638.1"/>
</dbReference>
<dbReference type="Allergome" id="2819">
    <property type="allergen name" value="Cor a 12"/>
</dbReference>
<dbReference type="Allergome" id="5764">
    <property type="allergen name" value="Cor a 12.0101"/>
</dbReference>
<dbReference type="EnsemblPlants" id="Cav05g23730.t1">
    <property type="protein sequence ID" value="Cav05g23730.t1.cds1"/>
    <property type="gene ID" value="Cav05g23730"/>
</dbReference>
<dbReference type="GeneID" id="132180725"/>
<dbReference type="Gramene" id="Cav05g23730.t1">
    <property type="protein sequence ID" value="Cav05g23730.t1.cds1"/>
    <property type="gene ID" value="Cav05g23730"/>
</dbReference>
<dbReference type="OrthoDB" id="1929188at2759"/>
<dbReference type="GO" id="GO:0016020">
    <property type="term" value="C:membrane"/>
    <property type="evidence" value="ECO:0007669"/>
    <property type="project" value="UniProtKB-SubCell"/>
</dbReference>
<dbReference type="GO" id="GO:0012511">
    <property type="term" value="C:monolayer-surrounded lipid storage body"/>
    <property type="evidence" value="ECO:0007669"/>
    <property type="project" value="InterPro"/>
</dbReference>
<dbReference type="GO" id="GO:0019915">
    <property type="term" value="P:lipid storage"/>
    <property type="evidence" value="ECO:0007669"/>
    <property type="project" value="TreeGrafter"/>
</dbReference>
<dbReference type="GO" id="GO:0050826">
    <property type="term" value="P:response to freezing"/>
    <property type="evidence" value="ECO:0007669"/>
    <property type="project" value="TreeGrafter"/>
</dbReference>
<dbReference type="GO" id="GO:0010344">
    <property type="term" value="P:seed oilbody biogenesis"/>
    <property type="evidence" value="ECO:0007669"/>
    <property type="project" value="TreeGrafter"/>
</dbReference>
<dbReference type="InterPro" id="IPR000136">
    <property type="entry name" value="Oleosin"/>
</dbReference>
<dbReference type="PANTHER" id="PTHR33203">
    <property type="entry name" value="OLEOSIN"/>
    <property type="match status" value="1"/>
</dbReference>
<dbReference type="PANTHER" id="PTHR33203:SF63">
    <property type="entry name" value="OLEOSIN 18.2 KDA"/>
    <property type="match status" value="1"/>
</dbReference>
<dbReference type="Pfam" id="PF01277">
    <property type="entry name" value="Oleosin"/>
    <property type="match status" value="1"/>
</dbReference>
<accession>Q84T21</accession>
<feature type="chain" id="PRO_0000456211" description="Oleosin Cor a 12">
    <location>
        <begin position="1"/>
        <end position="159"/>
    </location>
</feature>
<feature type="transmembrane region" description="Helical" evidence="2">
    <location>
        <begin position="45"/>
        <end position="65"/>
    </location>
</feature>
<feature type="transmembrane region" description="Helical" evidence="2">
    <location>
        <begin position="70"/>
        <end position="90"/>
    </location>
</feature>
<feature type="transmembrane region" description="Helical" evidence="2">
    <location>
        <begin position="92"/>
        <end position="112"/>
    </location>
</feature>
<feature type="region of interest" description="Disordered" evidence="3">
    <location>
        <begin position="1"/>
        <end position="24"/>
    </location>
</feature>
<feature type="compositionally biased region" description="Polar residues" evidence="3">
    <location>
        <begin position="1"/>
        <end position="10"/>
    </location>
</feature>
<comment type="function">
    <text evidence="7">May have a structural role to stabilize the lipid body during desiccation of the seed by preventing coalescence of the oil. Probably interacts with both lipid and phospholipid moieties of lipid bodies. May also provide recognition signals for specific lipase anchorage in lipolysis during seedling growth.</text>
</comment>
<comment type="subcellular location">
    <subcellularLocation>
        <location evidence="1">Lipid droplet</location>
    </subcellularLocation>
    <subcellularLocation>
        <location evidence="2">Membrane</location>
        <topology evidence="2">Multi-pass membrane protein</topology>
    </subcellularLocation>
    <text evidence="7">Surface of oil bodies. Oleosins exist at a monolayer lipid/water interface.</text>
</comment>
<comment type="tissue specificity">
    <text evidence="4">Expressed in seeds.</text>
</comment>
<comment type="mass spectrometry"/>
<comment type="allergen">
    <text evidence="5">Causes an allergic reaction in human (PubMed:34146442). Binds to IgE of patients allergic to hazelnuts (PubMed:34146442).</text>
</comment>
<comment type="similarity">
    <text evidence="7">Belongs to the oleosin family.</text>
</comment>
<proteinExistence type="evidence at protein level"/>
<name>OLE12_CORAV</name>
<organism evidence="8">
    <name type="scientific">Corylus avellana</name>
    <name type="common">European hazel</name>
    <name type="synonym">Corylus maxima</name>
    <dbReference type="NCBI Taxonomy" id="13451"/>
    <lineage>
        <taxon>Eukaryota</taxon>
        <taxon>Viridiplantae</taxon>
        <taxon>Streptophyta</taxon>
        <taxon>Embryophyta</taxon>
        <taxon>Tracheophyta</taxon>
        <taxon>Spermatophyta</taxon>
        <taxon>Magnoliopsida</taxon>
        <taxon>eudicotyledons</taxon>
        <taxon>Gunneridae</taxon>
        <taxon>Pentapetalae</taxon>
        <taxon>rosids</taxon>
        <taxon>fabids</taxon>
        <taxon>Fagales</taxon>
        <taxon>Betulaceae</taxon>
        <taxon>Corylus</taxon>
    </lineage>
</organism>